<feature type="chain" id="PRO_0000131770" description="Protein translocase subunit SecY">
    <location>
        <begin position="1"/>
        <end position="463"/>
    </location>
</feature>
<feature type="topological domain" description="Cytoplasmic" evidence="1">
    <location>
        <begin position="1"/>
        <end position="20"/>
    </location>
</feature>
<feature type="transmembrane region" description="Helical; Name=Helix 1" evidence="2">
    <location>
        <begin position="21"/>
        <end position="47"/>
    </location>
</feature>
<feature type="topological domain" description="Extracellular" evidence="1">
    <location>
        <begin position="48"/>
        <end position="60"/>
    </location>
</feature>
<feature type="transmembrane region" description="Discontinuously helical; Name=Helix 2" evidence="1">
    <location>
        <begin position="61"/>
        <end position="89"/>
    </location>
</feature>
<feature type="intramembrane region" description="Helical; Name=Helix 2A" evidence="1">
    <location>
        <begin position="61"/>
        <end position="68"/>
    </location>
</feature>
<feature type="intramembrane region" evidence="1">
    <location>
        <begin position="69"/>
        <end position="80"/>
    </location>
</feature>
<feature type="intramembrane region" description="Helical; Name=Helix 2B" evidence="1">
    <location>
        <begin position="81"/>
        <end position="89"/>
    </location>
</feature>
<feature type="topological domain" description="Cytoplasmic" evidence="1">
    <location>
        <begin position="90"/>
        <end position="110"/>
    </location>
</feature>
<feature type="transmembrane region" description="Helical; Name=Helix 3" evidence="2">
    <location>
        <begin position="111"/>
        <end position="134"/>
    </location>
</feature>
<feature type="topological domain" description="Extracellular" evidence="1">
    <location>
        <begin position="135"/>
        <end position="142"/>
    </location>
</feature>
<feature type="transmembrane region" description="Helical; Name=Helix 4" evidence="2">
    <location>
        <begin position="143"/>
        <end position="167"/>
    </location>
</feature>
<feature type="topological domain" description="Cytoplasmic" evidence="1">
    <location>
        <begin position="168"/>
        <end position="174"/>
    </location>
</feature>
<feature type="transmembrane region" description="Helical; Name=Helix 5" evidence="2">
    <location>
        <begin position="175"/>
        <end position="193"/>
    </location>
</feature>
<feature type="topological domain" description="Extracellular" evidence="1">
    <location>
        <begin position="194"/>
        <end position="236"/>
    </location>
</feature>
<feature type="transmembrane region" description="Helical; Name=Helix 6" evidence="2">
    <location>
        <begin position="237"/>
        <end position="258"/>
    </location>
</feature>
<feature type="topological domain" description="Cytoplasmic" evidence="1">
    <location>
        <begin position="259"/>
        <end position="283"/>
    </location>
</feature>
<feature type="transmembrane region" description="Helical; Name=Helix 7" evidence="2">
    <location>
        <begin position="284"/>
        <end position="305"/>
    </location>
</feature>
<feature type="topological domain" description="Extracellular" evidence="1">
    <location>
        <begin position="306"/>
        <end position="341"/>
    </location>
</feature>
<feature type="transmembrane region" description="Helical; Name=Helix 8" evidence="2">
    <location>
        <begin position="342"/>
        <end position="361"/>
    </location>
</feature>
<feature type="topological domain" description="Cytoplasmic" evidence="1">
    <location>
        <begin position="362"/>
        <end position="404"/>
    </location>
</feature>
<feature type="transmembrane region" description="Helical; Name=Helix 9" evidence="2">
    <location>
        <begin position="405"/>
        <end position="423"/>
    </location>
</feature>
<feature type="topological domain" description="Extracellular" evidence="1">
    <location>
        <begin position="424"/>
        <end position="426"/>
    </location>
</feature>
<feature type="transmembrane region" description="Helical; Name=Helix 10" evidence="2">
    <location>
        <begin position="427"/>
        <end position="441"/>
    </location>
</feature>
<feature type="topological domain" description="Cytoplasmic" evidence="1">
    <location>
        <begin position="442"/>
        <end position="463"/>
    </location>
</feature>
<comment type="function">
    <text evidence="2">The central subunit of the protein translocation channel SecYEG. Consists of two halves formed by TMs 1-5 and 6-10. These two domains form a lateral gate at the front which open onto the bilayer between TMs 2 and 7, and are clamped together by SecE at the back. The channel is closed by both a pore ring composed of hydrophobic SecY resides and a short helix (helix 2A) on the extracellular side of the membrane which forms a plug. The plug probably moves laterally to allow the channel to open. The ring and the pore may move independently.</text>
</comment>
<comment type="subunit">
    <text evidence="2">Component of the Sec protein translocase complex. Heterotrimer consisting of alpha (SecY), beta (SecG) and gamma (SecE) subunits. The heterotrimers can form oligomers, although 1 heterotrimer is thought to be able to translocate proteins. Interacts with the ribosome. May interact with SecDF, and other proteins may be involved.</text>
</comment>
<comment type="subcellular location">
    <subcellularLocation>
        <location evidence="2">Cell membrane</location>
        <topology evidence="2">Multi-pass membrane protein</topology>
    </subcellularLocation>
</comment>
<comment type="similarity">
    <text evidence="2">Belongs to the SecY/SEC61-alpha family.</text>
</comment>
<sequence length="463" mass="50242">MGFMDFLAKMGENLPAVSKPKDKPTLTRKLLWTFIGLIVYLLMASIPLYGVTSSNSFLSNFLAQQIIFASSQGTLAQLGIGPVITSGLIMQILVGSKLINVDLTTQEGKSKFTQAEKALALIFIIVESSLFGYVFTRATSNILLPIIVVVQLIIASYIILLLDEMIQKGWGLGSGVSLFIMAGIMKVIFWNMFGIVSVQSQNLPVGFFPLLVSYITSGRNLQEIVLNTSSTTPYQPDLIGLIATVGLTILIVYLVNTNIYIPVTTQRLRGIRTTVPLNFLYVSSIPVIFVSVLGADIQLFASLANSISNSASGILTDIANAFFFPPQGVPHSVYALVVDPVGAAIYAAVFIVLSIVFGMLWIDVAGLDPKTQAEQMIRSGIEIPGMRTNPRIIEGILSKYIYALGFFSSLIVGLIAVVATFLGTYGTGVGLLLAITIAMQYYNLLAYERTLEMYPLLKRIVGE</sequence>
<organism>
    <name type="scientific">Sulfolobus acidocaldarius (strain ATCC 33909 / DSM 639 / JCM 8929 / NBRC 15157 / NCIMB 11770)</name>
    <dbReference type="NCBI Taxonomy" id="330779"/>
    <lineage>
        <taxon>Archaea</taxon>
        <taxon>Thermoproteota</taxon>
        <taxon>Thermoprotei</taxon>
        <taxon>Sulfolobales</taxon>
        <taxon>Sulfolobaceae</taxon>
        <taxon>Sulfolobus</taxon>
    </lineage>
</organism>
<reference key="1">
    <citation type="journal article" date="1995" name="Biochim. Biophys. Acta">
        <title>A secY homologous gene in the crenarchaeon Sulfolobus acidocaldarius.</title>
        <authorList>
            <person name="Kath T."/>
            <person name="Schaefer G."/>
        </authorList>
    </citation>
    <scope>NUCLEOTIDE SEQUENCE [GENOMIC DNA]</scope>
    <source>
        <strain>ATCC 33909 / DSM 639 / JCM 8929 / NBRC 15157 / NCIMB 11770</strain>
    </source>
</reference>
<reference key="2">
    <citation type="journal article" date="1999" name="Mol. Phylogenet. Evol.">
        <title>The structure and evolution of the ribosomal proteins encoded in the spc operon of the archaeon (Crenarchaeota) Sulfolobus acidocaldarius.</title>
        <authorList>
            <person name="Yang D."/>
            <person name="Kusser I."/>
            <person name="Koepke A.K."/>
            <person name="Koop B.F."/>
            <person name="Matheson A.T."/>
        </authorList>
    </citation>
    <scope>NUCLEOTIDE SEQUENCE [GENOMIC DNA]</scope>
    <source>
        <strain>ATCC 33909 / DSM 639 / JCM 8929 / NBRC 15157 / NCIMB 11770</strain>
    </source>
</reference>
<reference key="3">
    <citation type="journal article" date="2005" name="J. Bacteriol.">
        <title>The genome of Sulfolobus acidocaldarius, a model organism of the Crenarchaeota.</title>
        <authorList>
            <person name="Chen L."/>
            <person name="Bruegger K."/>
            <person name="Skovgaard M."/>
            <person name="Redder P."/>
            <person name="She Q."/>
            <person name="Torarinsson E."/>
            <person name="Greve B."/>
            <person name="Awayez M."/>
            <person name="Zibat A."/>
            <person name="Klenk H.-P."/>
            <person name="Garrett R.A."/>
        </authorList>
    </citation>
    <scope>NUCLEOTIDE SEQUENCE [LARGE SCALE GENOMIC DNA]</scope>
    <source>
        <strain>ATCC 33909 / DSM 639 / JCM 8929 / NBRC 15157 / NCIMB 11770</strain>
    </source>
</reference>
<proteinExistence type="inferred from homology"/>
<name>SECY_SULAC</name>
<accession>P49978</accession>
<accession>Q4JB63</accession>
<protein>
    <recommendedName>
        <fullName evidence="2">Protein translocase subunit SecY</fullName>
    </recommendedName>
    <alternativeName>
        <fullName evidence="2">Protein transport protein SEC61 subunit alpha homolog</fullName>
    </alternativeName>
</protein>
<dbReference type="EMBL" id="X85020">
    <property type="protein sequence ID" value="CAA59382.1"/>
    <property type="molecule type" value="Genomic_DNA"/>
</dbReference>
<dbReference type="EMBL" id="Y07778">
    <property type="protein sequence ID" value="CAA69100.1"/>
    <property type="molecule type" value="Genomic_DNA"/>
</dbReference>
<dbReference type="EMBL" id="CP000077">
    <property type="protein sequence ID" value="AAY79966.1"/>
    <property type="molecule type" value="Genomic_DNA"/>
</dbReference>
<dbReference type="PIR" id="S59968">
    <property type="entry name" value="S59968"/>
</dbReference>
<dbReference type="RefSeq" id="WP_011277468.1">
    <property type="nucleotide sequence ID" value="NC_007181.1"/>
</dbReference>
<dbReference type="SMR" id="P49978"/>
<dbReference type="STRING" id="330779.Saci_0574"/>
<dbReference type="GeneID" id="14551095"/>
<dbReference type="GeneID" id="78440917"/>
<dbReference type="KEGG" id="sai:Saci_0574"/>
<dbReference type="PATRIC" id="fig|330779.12.peg.553"/>
<dbReference type="eggNOG" id="arCOG04169">
    <property type="taxonomic scope" value="Archaea"/>
</dbReference>
<dbReference type="HOGENOM" id="CLU_031763_2_1_2"/>
<dbReference type="Proteomes" id="UP000001018">
    <property type="component" value="Chromosome"/>
</dbReference>
<dbReference type="GO" id="GO:0005886">
    <property type="term" value="C:plasma membrane"/>
    <property type="evidence" value="ECO:0007669"/>
    <property type="project" value="UniProtKB-SubCell"/>
</dbReference>
<dbReference type="GO" id="GO:0065002">
    <property type="term" value="P:intracellular protein transmembrane transport"/>
    <property type="evidence" value="ECO:0007669"/>
    <property type="project" value="UniProtKB-UniRule"/>
</dbReference>
<dbReference type="GO" id="GO:0006605">
    <property type="term" value="P:protein targeting"/>
    <property type="evidence" value="ECO:0007669"/>
    <property type="project" value="UniProtKB-UniRule"/>
</dbReference>
<dbReference type="Gene3D" id="1.10.3370.10">
    <property type="entry name" value="SecY subunit domain"/>
    <property type="match status" value="1"/>
</dbReference>
<dbReference type="HAMAP" id="MF_01465">
    <property type="entry name" value="SecY"/>
    <property type="match status" value="1"/>
</dbReference>
<dbReference type="InterPro" id="IPR026593">
    <property type="entry name" value="SecY"/>
</dbReference>
<dbReference type="InterPro" id="IPR002208">
    <property type="entry name" value="SecY/SEC61-alpha"/>
</dbReference>
<dbReference type="InterPro" id="IPR030659">
    <property type="entry name" value="SecY_CS"/>
</dbReference>
<dbReference type="InterPro" id="IPR023201">
    <property type="entry name" value="SecY_dom_sf"/>
</dbReference>
<dbReference type="InterPro" id="IPR019561">
    <property type="entry name" value="Translocon_Sec61/SecY_plug_dom"/>
</dbReference>
<dbReference type="NCBIfam" id="NF006341">
    <property type="entry name" value="PRK08568.1-5"/>
    <property type="match status" value="1"/>
</dbReference>
<dbReference type="PANTHER" id="PTHR10906">
    <property type="entry name" value="SECY/SEC61-ALPHA FAMILY MEMBER"/>
    <property type="match status" value="1"/>
</dbReference>
<dbReference type="Pfam" id="PF10559">
    <property type="entry name" value="Plug_translocon"/>
    <property type="match status" value="1"/>
</dbReference>
<dbReference type="Pfam" id="PF00344">
    <property type="entry name" value="SecY"/>
    <property type="match status" value="1"/>
</dbReference>
<dbReference type="PIRSF" id="PIRSF004557">
    <property type="entry name" value="SecY"/>
    <property type="match status" value="1"/>
</dbReference>
<dbReference type="PRINTS" id="PR00303">
    <property type="entry name" value="SECYTRNLCASE"/>
</dbReference>
<dbReference type="SUPFAM" id="SSF103491">
    <property type="entry name" value="Preprotein translocase SecY subunit"/>
    <property type="match status" value="1"/>
</dbReference>
<dbReference type="PROSITE" id="PS00755">
    <property type="entry name" value="SECY_1"/>
    <property type="match status" value="1"/>
</dbReference>
<dbReference type="PROSITE" id="PS00756">
    <property type="entry name" value="SECY_2"/>
    <property type="match status" value="1"/>
</dbReference>
<evidence type="ECO:0000250" key="1"/>
<evidence type="ECO:0000255" key="2">
    <source>
        <dbReference type="HAMAP-Rule" id="MF_01465"/>
    </source>
</evidence>
<keyword id="KW-1003">Cell membrane</keyword>
<keyword id="KW-0472">Membrane</keyword>
<keyword id="KW-0653">Protein transport</keyword>
<keyword id="KW-1185">Reference proteome</keyword>
<keyword id="KW-0811">Translocation</keyword>
<keyword id="KW-0812">Transmembrane</keyword>
<keyword id="KW-1133">Transmembrane helix</keyword>
<keyword id="KW-0813">Transport</keyword>
<gene>
    <name evidence="2" type="primary">secY</name>
    <name type="ordered locus">Saci_0574</name>
</gene>